<name>RL18_DESDA</name>
<sequence length="119" mass="13190">MKYSKNESRQRRKIRISKKVSGTAERPRLVVYRSNLHVYAQIVNDLDGATLVATSTLALGKNESGLHCNKGGAEKVGIEIARMAKEKNIDKVVFDRNGYLYHGRVKAVADGAREGGLEF</sequence>
<reference key="1">
    <citation type="submission" date="2009-01" db="EMBL/GenBank/DDBJ databases">
        <title>Complete sequence of Desulfovibrio desulfuricans subsp. desulfuricans str. ATCC 27774.</title>
        <authorList>
            <consortium name="US DOE Joint Genome Institute"/>
            <person name="Lucas S."/>
            <person name="Copeland A."/>
            <person name="Lapidus A."/>
            <person name="Glavina del Rio T."/>
            <person name="Tice H."/>
            <person name="Bruce D."/>
            <person name="Goodwin L."/>
            <person name="Pitluck S."/>
            <person name="Sims D."/>
            <person name="Lu M."/>
            <person name="Kiss H."/>
            <person name="Meineke L."/>
            <person name="Brettin T."/>
            <person name="Detter J.C."/>
            <person name="Han C."/>
            <person name="Larimer F."/>
            <person name="Land M."/>
            <person name="Hauser L."/>
            <person name="Kyrpides N."/>
            <person name="Ovchinnikova G."/>
            <person name="Hazen T.C."/>
        </authorList>
    </citation>
    <scope>NUCLEOTIDE SEQUENCE [LARGE SCALE GENOMIC DNA]</scope>
    <source>
        <strain>ATCC 27774 / DSM 6949 / MB</strain>
    </source>
</reference>
<dbReference type="EMBL" id="CP001358">
    <property type="protein sequence ID" value="ACL48584.1"/>
    <property type="molecule type" value="Genomic_DNA"/>
</dbReference>
<dbReference type="SMR" id="B8IYK7"/>
<dbReference type="STRING" id="525146.Ddes_0676"/>
<dbReference type="KEGG" id="dds:Ddes_0676"/>
<dbReference type="eggNOG" id="COG0256">
    <property type="taxonomic scope" value="Bacteria"/>
</dbReference>
<dbReference type="HOGENOM" id="CLU_098841_0_1_7"/>
<dbReference type="GO" id="GO:0022625">
    <property type="term" value="C:cytosolic large ribosomal subunit"/>
    <property type="evidence" value="ECO:0007669"/>
    <property type="project" value="TreeGrafter"/>
</dbReference>
<dbReference type="GO" id="GO:0008097">
    <property type="term" value="F:5S rRNA binding"/>
    <property type="evidence" value="ECO:0007669"/>
    <property type="project" value="TreeGrafter"/>
</dbReference>
<dbReference type="GO" id="GO:0003735">
    <property type="term" value="F:structural constituent of ribosome"/>
    <property type="evidence" value="ECO:0007669"/>
    <property type="project" value="InterPro"/>
</dbReference>
<dbReference type="GO" id="GO:0006412">
    <property type="term" value="P:translation"/>
    <property type="evidence" value="ECO:0007669"/>
    <property type="project" value="UniProtKB-UniRule"/>
</dbReference>
<dbReference type="CDD" id="cd00432">
    <property type="entry name" value="Ribosomal_L18_L5e"/>
    <property type="match status" value="1"/>
</dbReference>
<dbReference type="FunFam" id="3.30.420.100:FF:000001">
    <property type="entry name" value="50S ribosomal protein L18"/>
    <property type="match status" value="1"/>
</dbReference>
<dbReference type="Gene3D" id="3.30.420.100">
    <property type="match status" value="1"/>
</dbReference>
<dbReference type="HAMAP" id="MF_01337_B">
    <property type="entry name" value="Ribosomal_uL18_B"/>
    <property type="match status" value="1"/>
</dbReference>
<dbReference type="InterPro" id="IPR004389">
    <property type="entry name" value="Ribosomal_uL18_bac-type"/>
</dbReference>
<dbReference type="InterPro" id="IPR005484">
    <property type="entry name" value="Ribosomal_uL18_bac/euk"/>
</dbReference>
<dbReference type="NCBIfam" id="TIGR00060">
    <property type="entry name" value="L18_bact"/>
    <property type="match status" value="1"/>
</dbReference>
<dbReference type="PANTHER" id="PTHR12899">
    <property type="entry name" value="39S RIBOSOMAL PROTEIN L18, MITOCHONDRIAL"/>
    <property type="match status" value="1"/>
</dbReference>
<dbReference type="PANTHER" id="PTHR12899:SF3">
    <property type="entry name" value="LARGE RIBOSOMAL SUBUNIT PROTEIN UL18M"/>
    <property type="match status" value="1"/>
</dbReference>
<dbReference type="Pfam" id="PF00861">
    <property type="entry name" value="Ribosomal_L18p"/>
    <property type="match status" value="1"/>
</dbReference>
<dbReference type="SUPFAM" id="SSF53137">
    <property type="entry name" value="Translational machinery components"/>
    <property type="match status" value="1"/>
</dbReference>
<evidence type="ECO:0000255" key="1">
    <source>
        <dbReference type="HAMAP-Rule" id="MF_01337"/>
    </source>
</evidence>
<evidence type="ECO:0000305" key="2"/>
<protein>
    <recommendedName>
        <fullName evidence="1">Large ribosomal subunit protein uL18</fullName>
    </recommendedName>
    <alternativeName>
        <fullName evidence="2">50S ribosomal protein L18</fullName>
    </alternativeName>
</protein>
<accession>B8IYK7</accession>
<feature type="chain" id="PRO_1000166224" description="Large ribosomal subunit protein uL18">
    <location>
        <begin position="1"/>
        <end position="119"/>
    </location>
</feature>
<organism>
    <name type="scientific">Desulfovibrio desulfuricans (strain ATCC 27774 / DSM 6949 / MB)</name>
    <dbReference type="NCBI Taxonomy" id="525146"/>
    <lineage>
        <taxon>Bacteria</taxon>
        <taxon>Pseudomonadati</taxon>
        <taxon>Thermodesulfobacteriota</taxon>
        <taxon>Desulfovibrionia</taxon>
        <taxon>Desulfovibrionales</taxon>
        <taxon>Desulfovibrionaceae</taxon>
        <taxon>Desulfovibrio</taxon>
    </lineage>
</organism>
<comment type="function">
    <text evidence="1">This is one of the proteins that bind and probably mediate the attachment of the 5S RNA into the large ribosomal subunit, where it forms part of the central protuberance.</text>
</comment>
<comment type="subunit">
    <text evidence="1">Part of the 50S ribosomal subunit; part of the 5S rRNA/L5/L18/L25 subcomplex. Contacts the 5S and 23S rRNAs.</text>
</comment>
<comment type="similarity">
    <text evidence="1">Belongs to the universal ribosomal protein uL18 family.</text>
</comment>
<gene>
    <name evidence="1" type="primary">rplR</name>
    <name type="ordered locus">Ddes_0676</name>
</gene>
<keyword id="KW-0687">Ribonucleoprotein</keyword>
<keyword id="KW-0689">Ribosomal protein</keyword>
<keyword id="KW-0694">RNA-binding</keyword>
<keyword id="KW-0699">rRNA-binding</keyword>
<proteinExistence type="inferred from homology"/>